<proteinExistence type="inferred from homology"/>
<sequence>MKRLTVHTAEKAQQYPILIAPDLIKNASLWHLYCSAPHIAIITNETVAPLYLSSLKAALTDKKVIDIILLDGECHKNLATYQHILTTLLEAHLGRDGLLIALGGGVINDITGFVAATYQRGICWITFPTTLLAQVDAAVGGKTGVNHACGKNMIGAFYPPQAVLMDTATLSTLPPREFSAGLAEVIKYALIYDISFLSWLEQHMDAVLRKEKISLENMIMNCCRYKSEIVCADEREQGMRALLNFGHTFGHALETITAYRHWLHGEAVAIGMRMAAELSEMRGLISADEKARVISLLQRAHLPTAIDIQLNCEDIYQTLFLDKKVRAGQLRFVLLSGLGQAHVVDDVTETEIFAVIAASRSENESFARF</sequence>
<evidence type="ECO:0000255" key="1">
    <source>
        <dbReference type="HAMAP-Rule" id="MF_00110"/>
    </source>
</evidence>
<protein>
    <recommendedName>
        <fullName evidence="1">3-dehydroquinate synthase</fullName>
        <shortName evidence="1">DHQS</shortName>
        <ecNumber evidence="1">4.2.3.4</ecNumber>
    </recommendedName>
</protein>
<keyword id="KW-0028">Amino-acid biosynthesis</keyword>
<keyword id="KW-0057">Aromatic amino acid biosynthesis</keyword>
<keyword id="KW-0170">Cobalt</keyword>
<keyword id="KW-0963">Cytoplasm</keyword>
<keyword id="KW-0456">Lyase</keyword>
<keyword id="KW-0479">Metal-binding</keyword>
<keyword id="KW-0520">NAD</keyword>
<keyword id="KW-0547">Nucleotide-binding</keyword>
<keyword id="KW-1185">Reference proteome</keyword>
<keyword id="KW-0862">Zinc</keyword>
<accession>A5EXS0</accession>
<reference key="1">
    <citation type="journal article" date="2007" name="Nat. Biotechnol.">
        <title>Genome sequence and identification of candidate vaccine antigens from the animal pathogen Dichelobacter nodosus.</title>
        <authorList>
            <person name="Myers G.S.A."/>
            <person name="Parker D."/>
            <person name="Al-Hasani K."/>
            <person name="Kennan R.M."/>
            <person name="Seemann T."/>
            <person name="Ren Q."/>
            <person name="Badger J.H."/>
            <person name="Selengut J.D."/>
            <person name="Deboy R.T."/>
            <person name="Tettelin H."/>
            <person name="Boyce J.D."/>
            <person name="McCarl V.P."/>
            <person name="Han X."/>
            <person name="Nelson W.C."/>
            <person name="Madupu R."/>
            <person name="Mohamoud Y."/>
            <person name="Holley T."/>
            <person name="Fedorova N."/>
            <person name="Khouri H."/>
            <person name="Bottomley S.P."/>
            <person name="Whittington R.J."/>
            <person name="Adler B."/>
            <person name="Songer J.G."/>
            <person name="Rood J.I."/>
            <person name="Paulsen I.T."/>
        </authorList>
    </citation>
    <scope>NUCLEOTIDE SEQUENCE [LARGE SCALE GENOMIC DNA]</scope>
    <source>
        <strain>VCS1703A</strain>
    </source>
</reference>
<feature type="chain" id="PRO_1000117482" description="3-dehydroquinate synthase">
    <location>
        <begin position="1"/>
        <end position="369"/>
    </location>
</feature>
<feature type="binding site" evidence="1">
    <location>
        <begin position="71"/>
        <end position="76"/>
    </location>
    <ligand>
        <name>NAD(+)</name>
        <dbReference type="ChEBI" id="CHEBI:57540"/>
    </ligand>
</feature>
<feature type="binding site" evidence="1">
    <location>
        <begin position="105"/>
        <end position="109"/>
    </location>
    <ligand>
        <name>NAD(+)</name>
        <dbReference type="ChEBI" id="CHEBI:57540"/>
    </ligand>
</feature>
<feature type="binding site" evidence="1">
    <location>
        <begin position="129"/>
        <end position="130"/>
    </location>
    <ligand>
        <name>NAD(+)</name>
        <dbReference type="ChEBI" id="CHEBI:57540"/>
    </ligand>
</feature>
<feature type="binding site" evidence="1">
    <location>
        <position position="142"/>
    </location>
    <ligand>
        <name>NAD(+)</name>
        <dbReference type="ChEBI" id="CHEBI:57540"/>
    </ligand>
</feature>
<feature type="binding site" evidence="1">
    <location>
        <position position="151"/>
    </location>
    <ligand>
        <name>NAD(+)</name>
        <dbReference type="ChEBI" id="CHEBI:57540"/>
    </ligand>
</feature>
<feature type="binding site" evidence="1">
    <location>
        <begin position="169"/>
        <end position="172"/>
    </location>
    <ligand>
        <name>NAD(+)</name>
        <dbReference type="ChEBI" id="CHEBI:57540"/>
    </ligand>
</feature>
<feature type="binding site" evidence="1">
    <location>
        <position position="184"/>
    </location>
    <ligand>
        <name>Zn(2+)</name>
        <dbReference type="ChEBI" id="CHEBI:29105"/>
    </ligand>
</feature>
<feature type="binding site" evidence="1">
    <location>
        <position position="247"/>
    </location>
    <ligand>
        <name>Zn(2+)</name>
        <dbReference type="ChEBI" id="CHEBI:29105"/>
    </ligand>
</feature>
<feature type="binding site" evidence="1">
    <location>
        <position position="264"/>
    </location>
    <ligand>
        <name>Zn(2+)</name>
        <dbReference type="ChEBI" id="CHEBI:29105"/>
    </ligand>
</feature>
<comment type="function">
    <text evidence="1">Catalyzes the conversion of 3-deoxy-D-arabino-heptulosonate 7-phosphate (DAHP) to dehydroquinate (DHQ).</text>
</comment>
<comment type="catalytic activity">
    <reaction evidence="1">
        <text>7-phospho-2-dehydro-3-deoxy-D-arabino-heptonate = 3-dehydroquinate + phosphate</text>
        <dbReference type="Rhea" id="RHEA:21968"/>
        <dbReference type="ChEBI" id="CHEBI:32364"/>
        <dbReference type="ChEBI" id="CHEBI:43474"/>
        <dbReference type="ChEBI" id="CHEBI:58394"/>
        <dbReference type="EC" id="4.2.3.4"/>
    </reaction>
</comment>
<comment type="cofactor">
    <cofactor evidence="1">
        <name>Co(2+)</name>
        <dbReference type="ChEBI" id="CHEBI:48828"/>
    </cofactor>
    <cofactor evidence="1">
        <name>Zn(2+)</name>
        <dbReference type="ChEBI" id="CHEBI:29105"/>
    </cofactor>
    <text evidence="1">Binds 1 divalent metal cation per subunit. Can use either Co(2+) or Zn(2+).</text>
</comment>
<comment type="cofactor">
    <cofactor evidence="1">
        <name>NAD(+)</name>
        <dbReference type="ChEBI" id="CHEBI:57540"/>
    </cofactor>
</comment>
<comment type="pathway">
    <text evidence="1">Metabolic intermediate biosynthesis; chorismate biosynthesis; chorismate from D-erythrose 4-phosphate and phosphoenolpyruvate: step 2/7.</text>
</comment>
<comment type="subcellular location">
    <subcellularLocation>
        <location evidence="1">Cytoplasm</location>
    </subcellularLocation>
</comment>
<comment type="similarity">
    <text evidence="1">Belongs to the sugar phosphate cyclases superfamily. Dehydroquinate synthase family.</text>
</comment>
<organism>
    <name type="scientific">Dichelobacter nodosus (strain VCS1703A)</name>
    <dbReference type="NCBI Taxonomy" id="246195"/>
    <lineage>
        <taxon>Bacteria</taxon>
        <taxon>Pseudomonadati</taxon>
        <taxon>Pseudomonadota</taxon>
        <taxon>Gammaproteobacteria</taxon>
        <taxon>Cardiobacteriales</taxon>
        <taxon>Cardiobacteriaceae</taxon>
        <taxon>Dichelobacter</taxon>
    </lineage>
</organism>
<name>AROB_DICNV</name>
<gene>
    <name evidence="1" type="primary">aroB</name>
    <name type="ordered locus">DNO_1084</name>
</gene>
<dbReference type="EC" id="4.2.3.4" evidence="1"/>
<dbReference type="EMBL" id="CP000513">
    <property type="protein sequence ID" value="ABQ13703.1"/>
    <property type="molecule type" value="Genomic_DNA"/>
</dbReference>
<dbReference type="RefSeq" id="WP_012031391.1">
    <property type="nucleotide sequence ID" value="NC_009446.1"/>
</dbReference>
<dbReference type="SMR" id="A5EXS0"/>
<dbReference type="STRING" id="246195.DNO_1084"/>
<dbReference type="KEGG" id="dno:DNO_1084"/>
<dbReference type="eggNOG" id="COG0337">
    <property type="taxonomic scope" value="Bacteria"/>
</dbReference>
<dbReference type="HOGENOM" id="CLU_001201_0_2_6"/>
<dbReference type="OrthoDB" id="9806583at2"/>
<dbReference type="UniPathway" id="UPA00053">
    <property type="reaction ID" value="UER00085"/>
</dbReference>
<dbReference type="Proteomes" id="UP000000248">
    <property type="component" value="Chromosome"/>
</dbReference>
<dbReference type="GO" id="GO:0005737">
    <property type="term" value="C:cytoplasm"/>
    <property type="evidence" value="ECO:0007669"/>
    <property type="project" value="UniProtKB-SubCell"/>
</dbReference>
<dbReference type="GO" id="GO:0003856">
    <property type="term" value="F:3-dehydroquinate synthase activity"/>
    <property type="evidence" value="ECO:0007669"/>
    <property type="project" value="UniProtKB-UniRule"/>
</dbReference>
<dbReference type="GO" id="GO:0046872">
    <property type="term" value="F:metal ion binding"/>
    <property type="evidence" value="ECO:0007669"/>
    <property type="project" value="UniProtKB-KW"/>
</dbReference>
<dbReference type="GO" id="GO:0000166">
    <property type="term" value="F:nucleotide binding"/>
    <property type="evidence" value="ECO:0007669"/>
    <property type="project" value="UniProtKB-KW"/>
</dbReference>
<dbReference type="GO" id="GO:0008652">
    <property type="term" value="P:amino acid biosynthetic process"/>
    <property type="evidence" value="ECO:0007669"/>
    <property type="project" value="UniProtKB-KW"/>
</dbReference>
<dbReference type="GO" id="GO:0009073">
    <property type="term" value="P:aromatic amino acid family biosynthetic process"/>
    <property type="evidence" value="ECO:0007669"/>
    <property type="project" value="UniProtKB-KW"/>
</dbReference>
<dbReference type="GO" id="GO:0009423">
    <property type="term" value="P:chorismate biosynthetic process"/>
    <property type="evidence" value="ECO:0007669"/>
    <property type="project" value="UniProtKB-UniRule"/>
</dbReference>
<dbReference type="CDD" id="cd08195">
    <property type="entry name" value="DHQS"/>
    <property type="match status" value="1"/>
</dbReference>
<dbReference type="FunFam" id="3.40.50.1970:FF:000007">
    <property type="entry name" value="Pentafunctional AROM polypeptide"/>
    <property type="match status" value="1"/>
</dbReference>
<dbReference type="Gene3D" id="3.40.50.1970">
    <property type="match status" value="1"/>
</dbReference>
<dbReference type="Gene3D" id="1.20.1090.10">
    <property type="entry name" value="Dehydroquinate synthase-like - alpha domain"/>
    <property type="match status" value="1"/>
</dbReference>
<dbReference type="HAMAP" id="MF_00110">
    <property type="entry name" value="DHQ_synthase"/>
    <property type="match status" value="1"/>
</dbReference>
<dbReference type="InterPro" id="IPR050071">
    <property type="entry name" value="Dehydroquinate_synthase"/>
</dbReference>
<dbReference type="InterPro" id="IPR016037">
    <property type="entry name" value="DHQ_synth_AroB"/>
</dbReference>
<dbReference type="InterPro" id="IPR030963">
    <property type="entry name" value="DHQ_synth_fam"/>
</dbReference>
<dbReference type="InterPro" id="IPR030960">
    <property type="entry name" value="DHQS/DOIS_N"/>
</dbReference>
<dbReference type="InterPro" id="IPR056179">
    <property type="entry name" value="DHQS_C"/>
</dbReference>
<dbReference type="NCBIfam" id="TIGR01357">
    <property type="entry name" value="aroB"/>
    <property type="match status" value="1"/>
</dbReference>
<dbReference type="PANTHER" id="PTHR43622">
    <property type="entry name" value="3-DEHYDROQUINATE SYNTHASE"/>
    <property type="match status" value="1"/>
</dbReference>
<dbReference type="PANTHER" id="PTHR43622:SF7">
    <property type="entry name" value="3-DEHYDROQUINATE SYNTHASE, CHLOROPLASTIC"/>
    <property type="match status" value="1"/>
</dbReference>
<dbReference type="Pfam" id="PF01761">
    <property type="entry name" value="DHQ_synthase"/>
    <property type="match status" value="1"/>
</dbReference>
<dbReference type="Pfam" id="PF24621">
    <property type="entry name" value="DHQS_C"/>
    <property type="match status" value="1"/>
</dbReference>
<dbReference type="PIRSF" id="PIRSF001455">
    <property type="entry name" value="DHQ_synth"/>
    <property type="match status" value="1"/>
</dbReference>
<dbReference type="SUPFAM" id="SSF56796">
    <property type="entry name" value="Dehydroquinate synthase-like"/>
    <property type="match status" value="1"/>
</dbReference>